<feature type="chain" id="PRO_0000427162" description="DNA translocase FtsK">
    <location>
        <begin position="1"/>
        <end position="831"/>
    </location>
</feature>
<feature type="transmembrane region" description="Helical" evidence="2">
    <location>
        <begin position="98"/>
        <end position="118"/>
    </location>
</feature>
<feature type="transmembrane region" description="Helical" evidence="2">
    <location>
        <begin position="132"/>
        <end position="152"/>
    </location>
</feature>
<feature type="transmembrane region" description="Helical" evidence="2">
    <location>
        <begin position="164"/>
        <end position="184"/>
    </location>
</feature>
<feature type="transmembrane region" description="Helical" evidence="2">
    <location>
        <begin position="214"/>
        <end position="234"/>
    </location>
</feature>
<feature type="topological domain" description="Cytoplasmic" evidence="2">
    <location>
        <begin position="235"/>
        <end position="831"/>
    </location>
</feature>
<feature type="domain" description="FtsK" evidence="3">
    <location>
        <begin position="476"/>
        <end position="676"/>
    </location>
</feature>
<feature type="region of interest" description="Disordered" evidence="4">
    <location>
        <begin position="1"/>
        <end position="48"/>
    </location>
</feature>
<feature type="region of interest" description="Disordered" evidence="4">
    <location>
        <begin position="296"/>
        <end position="331"/>
    </location>
</feature>
<feature type="compositionally biased region" description="Low complexity" evidence="4">
    <location>
        <begin position="7"/>
        <end position="30"/>
    </location>
</feature>
<feature type="binding site" evidence="3">
    <location>
        <begin position="496"/>
        <end position="501"/>
    </location>
    <ligand>
        <name>ATP</name>
        <dbReference type="ChEBI" id="CHEBI:30616"/>
    </ligand>
</feature>
<sequence length="831" mass="88887">MSSKTVARSGTRTSRSKATSRGASRSARSAVPRKRSRPVKGVGRPSRRHHRSLLVSTGLACGRAMRAVWMMAAKGTGGAARSIGRARDIEPGHRRDGIALVLLGLAVVVAASSWFDAARPLGAWVDALLRTFIGSAVVMLPLVAAAVAVVLMRTSPNPDSRPRLILGASLIGLSFLGLCHLWAGSPEAPESRLRAAGFIGFAIGGPLSDGLTAWIAAPLLFIGALFGLLLLAGITIREVPDAMRAMFGTRLLPREYADDFEDFADFDGDDADTVEVARQDFSDGYYDEVPLCSDDGPPAWPSAEVPQDDTATIPEASAGRGSGRRGRRKDTQVLDRIVEGPYTLPSLDLLISGDPPKKRSAANTHMAGAIGEVLTQFKVDAAVTGCTRGPTVTRYEVELGPGVKVEKITALQRNIAYAVATESVRMLAPIPGKSAVGIEVPNTDREMVRLADVLTARETRRDHHPLVIGLGKDIEGDFISANLAKMPHLLVAGSTGSGKSSFVNSMLVSLLTRATPEEVRMILIDPKMVELTPYEGIPHLITPIITQPKKAAAALAWLVDEMEQRYQDMQASRVRHIDDFNDKVRSGAITAPLGSQREYRPYPYVVAIVDELADLMMTAPRDVEDAIVRITQKARAAGIHLVLATQRPSVDVVTGLIKTNVPSRLAFATSSLTDSRVILDQAGAEKLIGMGDGLFLPMGASKPLRLQGAYVSDEEIHAVVTACKEQAEPEYTEGVTTAKPTAERTDVDPDIGDDMDVFLQAVELVVSSQFGSTSMLQRKLRVGFAKAGRLMDLMETRGIVGPSEGSKAREVLVKPDELAGTLAAIRGDGGE</sequence>
<accession>P9WNA2</accession>
<accession>L0TDF9</accession>
<accession>O33290</accession>
<gene>
    <name type="primary">ftsK</name>
    <name type="ordered locus">MT2819</name>
</gene>
<evidence type="ECO:0000250" key="1"/>
<evidence type="ECO:0000255" key="2"/>
<evidence type="ECO:0000255" key="3">
    <source>
        <dbReference type="PROSITE-ProRule" id="PRU00289"/>
    </source>
</evidence>
<evidence type="ECO:0000256" key="4">
    <source>
        <dbReference type="SAM" id="MobiDB-lite"/>
    </source>
</evidence>
<evidence type="ECO:0000305" key="5"/>
<reference key="1">
    <citation type="journal article" date="2002" name="J. Bacteriol.">
        <title>Whole-genome comparison of Mycobacterium tuberculosis clinical and laboratory strains.</title>
        <authorList>
            <person name="Fleischmann R.D."/>
            <person name="Alland D."/>
            <person name="Eisen J.A."/>
            <person name="Carpenter L."/>
            <person name="White O."/>
            <person name="Peterson J.D."/>
            <person name="DeBoy R.T."/>
            <person name="Dodson R.J."/>
            <person name="Gwinn M.L."/>
            <person name="Haft D.H."/>
            <person name="Hickey E.K."/>
            <person name="Kolonay J.F."/>
            <person name="Nelson W.C."/>
            <person name="Umayam L.A."/>
            <person name="Ermolaeva M.D."/>
            <person name="Salzberg S.L."/>
            <person name="Delcher A."/>
            <person name="Utterback T.R."/>
            <person name="Weidman J.F."/>
            <person name="Khouri H.M."/>
            <person name="Gill J."/>
            <person name="Mikula A."/>
            <person name="Bishai W."/>
            <person name="Jacobs W.R. Jr."/>
            <person name="Venter J.C."/>
            <person name="Fraser C.M."/>
        </authorList>
    </citation>
    <scope>NUCLEOTIDE SEQUENCE [LARGE SCALE GENOMIC DNA]</scope>
    <source>
        <strain>CDC 1551 / Oshkosh</strain>
    </source>
</reference>
<keyword id="KW-0067">ATP-binding</keyword>
<keyword id="KW-0131">Cell cycle</keyword>
<keyword id="KW-0132">Cell division</keyword>
<keyword id="KW-1003">Cell membrane</keyword>
<keyword id="KW-0159">Chromosome partition</keyword>
<keyword id="KW-0238">DNA-binding</keyword>
<keyword id="KW-0472">Membrane</keyword>
<keyword id="KW-0547">Nucleotide-binding</keyword>
<keyword id="KW-1185">Reference proteome</keyword>
<keyword id="KW-0812">Transmembrane</keyword>
<keyword id="KW-1133">Transmembrane helix</keyword>
<proteinExistence type="inferred from homology"/>
<protein>
    <recommendedName>
        <fullName>DNA translocase FtsK</fullName>
    </recommendedName>
</protein>
<dbReference type="EMBL" id="AE000516">
    <property type="protein sequence ID" value="AAK47139.1"/>
    <property type="status" value="ALT_INIT"/>
    <property type="molecule type" value="Genomic_DNA"/>
</dbReference>
<dbReference type="PIR" id="C70879">
    <property type="entry name" value="C70879"/>
</dbReference>
<dbReference type="SMR" id="P9WNA2"/>
<dbReference type="KEGG" id="mtc:MT2819"/>
<dbReference type="HOGENOM" id="CLU_001981_2_1_11"/>
<dbReference type="Proteomes" id="UP000001020">
    <property type="component" value="Chromosome"/>
</dbReference>
<dbReference type="GO" id="GO:0005886">
    <property type="term" value="C:plasma membrane"/>
    <property type="evidence" value="ECO:0007669"/>
    <property type="project" value="UniProtKB-SubCell"/>
</dbReference>
<dbReference type="GO" id="GO:0005524">
    <property type="term" value="F:ATP binding"/>
    <property type="evidence" value="ECO:0007669"/>
    <property type="project" value="UniProtKB-KW"/>
</dbReference>
<dbReference type="GO" id="GO:0003677">
    <property type="term" value="F:DNA binding"/>
    <property type="evidence" value="ECO:0007669"/>
    <property type="project" value="UniProtKB-KW"/>
</dbReference>
<dbReference type="GO" id="GO:0051301">
    <property type="term" value="P:cell division"/>
    <property type="evidence" value="ECO:0007669"/>
    <property type="project" value="UniProtKB-KW"/>
</dbReference>
<dbReference type="GO" id="GO:0007059">
    <property type="term" value="P:chromosome segregation"/>
    <property type="evidence" value="ECO:0007669"/>
    <property type="project" value="UniProtKB-KW"/>
</dbReference>
<dbReference type="CDD" id="cd01127">
    <property type="entry name" value="TrwB_TraG_TraD_VirD4"/>
    <property type="match status" value="1"/>
</dbReference>
<dbReference type="FunFam" id="1.10.10.10:FF:000236">
    <property type="entry name" value="Cell division protein FtsK"/>
    <property type="match status" value="1"/>
</dbReference>
<dbReference type="FunFam" id="3.40.50.300:FF:000209">
    <property type="entry name" value="Cell division protein FtsK"/>
    <property type="match status" value="1"/>
</dbReference>
<dbReference type="FunFam" id="3.30.980.40:FF:000001">
    <property type="entry name" value="DNA translocase FtsK"/>
    <property type="match status" value="1"/>
</dbReference>
<dbReference type="Gene3D" id="3.30.980.40">
    <property type="match status" value="1"/>
</dbReference>
<dbReference type="Gene3D" id="3.40.50.300">
    <property type="entry name" value="P-loop containing nucleotide triphosphate hydrolases"/>
    <property type="match status" value="1"/>
</dbReference>
<dbReference type="Gene3D" id="1.10.10.10">
    <property type="entry name" value="Winged helix-like DNA-binding domain superfamily/Winged helix DNA-binding domain"/>
    <property type="match status" value="1"/>
</dbReference>
<dbReference type="InterPro" id="IPR050206">
    <property type="entry name" value="FtsK/SpoIIIE/SftA"/>
</dbReference>
<dbReference type="InterPro" id="IPR025199">
    <property type="entry name" value="FtsK_4TM"/>
</dbReference>
<dbReference type="InterPro" id="IPR041027">
    <property type="entry name" value="FtsK_alpha"/>
</dbReference>
<dbReference type="InterPro" id="IPR002543">
    <property type="entry name" value="FtsK_dom"/>
</dbReference>
<dbReference type="InterPro" id="IPR018541">
    <property type="entry name" value="Ftsk_gamma"/>
</dbReference>
<dbReference type="InterPro" id="IPR027417">
    <property type="entry name" value="P-loop_NTPase"/>
</dbReference>
<dbReference type="InterPro" id="IPR036388">
    <property type="entry name" value="WH-like_DNA-bd_sf"/>
</dbReference>
<dbReference type="InterPro" id="IPR036390">
    <property type="entry name" value="WH_DNA-bd_sf"/>
</dbReference>
<dbReference type="PANTHER" id="PTHR22683:SF41">
    <property type="entry name" value="DNA TRANSLOCASE FTSK"/>
    <property type="match status" value="1"/>
</dbReference>
<dbReference type="PANTHER" id="PTHR22683">
    <property type="entry name" value="SPORULATION PROTEIN RELATED"/>
    <property type="match status" value="1"/>
</dbReference>
<dbReference type="Pfam" id="PF13491">
    <property type="entry name" value="FtsK_4TM"/>
    <property type="match status" value="1"/>
</dbReference>
<dbReference type="Pfam" id="PF17854">
    <property type="entry name" value="FtsK_alpha"/>
    <property type="match status" value="1"/>
</dbReference>
<dbReference type="Pfam" id="PF09397">
    <property type="entry name" value="FtsK_gamma"/>
    <property type="match status" value="1"/>
</dbReference>
<dbReference type="Pfam" id="PF01580">
    <property type="entry name" value="FtsK_SpoIIIE"/>
    <property type="match status" value="1"/>
</dbReference>
<dbReference type="SMART" id="SM00843">
    <property type="entry name" value="Ftsk_gamma"/>
    <property type="match status" value="1"/>
</dbReference>
<dbReference type="SUPFAM" id="SSF52540">
    <property type="entry name" value="P-loop containing nucleoside triphosphate hydrolases"/>
    <property type="match status" value="1"/>
</dbReference>
<dbReference type="SUPFAM" id="SSF46785">
    <property type="entry name" value="Winged helix' DNA-binding domain"/>
    <property type="match status" value="1"/>
</dbReference>
<dbReference type="PROSITE" id="PS50901">
    <property type="entry name" value="FTSK"/>
    <property type="match status" value="1"/>
</dbReference>
<name>FTSK_MYCTO</name>
<comment type="function">
    <text evidence="1">Essential cell division protein that coordinates cell division and chromosome segregation. The N-terminus is involved in assembly of the cell-division machinery. The C-terminus functions as a DNA motor that moves dsDNA in an ATP-dependent manner towards the dif recombination site, which is located within the replication terminus region. Required for activation of the Xer recombinase, allowing activation of chromosome unlinking by recombination (By similarity).</text>
</comment>
<comment type="subunit">
    <text evidence="1">Homohexamer. Forms a ring that surrounds DNA (By similarity).</text>
</comment>
<comment type="subcellular location">
    <subcellularLocation>
        <location evidence="1">Cell membrane</location>
        <topology evidence="1">Multi-pass membrane protein</topology>
    </subcellularLocation>
    <text evidence="1">Located at the septum.</text>
</comment>
<comment type="domain">
    <text evidence="1">Consists of an N-terminal domain, which is sufficient for the localization to the septal ring and is required for cell division, followed by a linker domain, and a C-terminal domain, which forms the translocation motor involved in chromosome segregation. The C-terminal domain can be further subdivided into alpha, beta and gamma subdomains. The alpha and beta subdomains form the DNA pump, and the gamma subdomain is a regulatory subdomain (By similarity).</text>
</comment>
<comment type="similarity">
    <text evidence="5">Belongs to the FtsK/SpoIIIE/SftA family.</text>
</comment>
<comment type="sequence caution" evidence="5">
    <conflict type="erroneous initiation">
        <sequence resource="EMBL-CDS" id="AAK47139"/>
    </conflict>
    <text>Extended N-terminus.</text>
</comment>
<organism>
    <name type="scientific">Mycobacterium tuberculosis (strain CDC 1551 / Oshkosh)</name>
    <dbReference type="NCBI Taxonomy" id="83331"/>
    <lineage>
        <taxon>Bacteria</taxon>
        <taxon>Bacillati</taxon>
        <taxon>Actinomycetota</taxon>
        <taxon>Actinomycetes</taxon>
        <taxon>Mycobacteriales</taxon>
        <taxon>Mycobacteriaceae</taxon>
        <taxon>Mycobacterium</taxon>
        <taxon>Mycobacterium tuberculosis complex</taxon>
    </lineage>
</organism>